<evidence type="ECO:0000255" key="1">
    <source>
        <dbReference type="HAMAP-Rule" id="MF_01849"/>
    </source>
</evidence>
<evidence type="ECO:0000255" key="2">
    <source>
        <dbReference type="PROSITE-ProRule" id="PRU01266"/>
    </source>
</evidence>
<organism>
    <name type="scientific">Pectobacterium atrosepticum (strain SCRI 1043 / ATCC BAA-672)</name>
    <name type="common">Erwinia carotovora subsp. atroseptica</name>
    <dbReference type="NCBI Taxonomy" id="218491"/>
    <lineage>
        <taxon>Bacteria</taxon>
        <taxon>Pseudomonadati</taxon>
        <taxon>Pseudomonadota</taxon>
        <taxon>Gammaproteobacteria</taxon>
        <taxon>Enterobacterales</taxon>
        <taxon>Pectobacteriaceae</taxon>
        <taxon>Pectobacterium</taxon>
    </lineage>
</organism>
<comment type="function">
    <text evidence="1">Specifically methylates position 2 of adenine 2503 in 23S rRNA and position 2 of adenine 37 in tRNAs. m2A2503 modification seems to play a crucial role in the proofreading step occurring at the peptidyl transferase center and thus would serve to optimize ribosomal fidelity.</text>
</comment>
<comment type="catalytic activity">
    <reaction evidence="1">
        <text>adenosine(2503) in 23S rRNA + 2 reduced [2Fe-2S]-[ferredoxin] + 2 S-adenosyl-L-methionine = 2-methyladenosine(2503) in 23S rRNA + 5'-deoxyadenosine + L-methionine + 2 oxidized [2Fe-2S]-[ferredoxin] + S-adenosyl-L-homocysteine</text>
        <dbReference type="Rhea" id="RHEA:42916"/>
        <dbReference type="Rhea" id="RHEA-COMP:10000"/>
        <dbReference type="Rhea" id="RHEA-COMP:10001"/>
        <dbReference type="Rhea" id="RHEA-COMP:10152"/>
        <dbReference type="Rhea" id="RHEA-COMP:10282"/>
        <dbReference type="ChEBI" id="CHEBI:17319"/>
        <dbReference type="ChEBI" id="CHEBI:33737"/>
        <dbReference type="ChEBI" id="CHEBI:33738"/>
        <dbReference type="ChEBI" id="CHEBI:57844"/>
        <dbReference type="ChEBI" id="CHEBI:57856"/>
        <dbReference type="ChEBI" id="CHEBI:59789"/>
        <dbReference type="ChEBI" id="CHEBI:74411"/>
        <dbReference type="ChEBI" id="CHEBI:74497"/>
        <dbReference type="EC" id="2.1.1.192"/>
    </reaction>
</comment>
<comment type="catalytic activity">
    <reaction evidence="1">
        <text>adenosine(37) in tRNA + 2 reduced [2Fe-2S]-[ferredoxin] + 2 S-adenosyl-L-methionine = 2-methyladenosine(37) in tRNA + 5'-deoxyadenosine + L-methionine + 2 oxidized [2Fe-2S]-[ferredoxin] + S-adenosyl-L-homocysteine</text>
        <dbReference type="Rhea" id="RHEA:43332"/>
        <dbReference type="Rhea" id="RHEA-COMP:10000"/>
        <dbReference type="Rhea" id="RHEA-COMP:10001"/>
        <dbReference type="Rhea" id="RHEA-COMP:10162"/>
        <dbReference type="Rhea" id="RHEA-COMP:10485"/>
        <dbReference type="ChEBI" id="CHEBI:17319"/>
        <dbReference type="ChEBI" id="CHEBI:33737"/>
        <dbReference type="ChEBI" id="CHEBI:33738"/>
        <dbReference type="ChEBI" id="CHEBI:57844"/>
        <dbReference type="ChEBI" id="CHEBI:57856"/>
        <dbReference type="ChEBI" id="CHEBI:59789"/>
        <dbReference type="ChEBI" id="CHEBI:74411"/>
        <dbReference type="ChEBI" id="CHEBI:74497"/>
        <dbReference type="EC" id="2.1.1.192"/>
    </reaction>
</comment>
<comment type="cofactor">
    <cofactor evidence="1">
        <name>[4Fe-4S] cluster</name>
        <dbReference type="ChEBI" id="CHEBI:49883"/>
    </cofactor>
    <text evidence="1">Binds 1 [4Fe-4S] cluster. The cluster is coordinated with 3 cysteines and an exchangeable S-adenosyl-L-methionine.</text>
</comment>
<comment type="subcellular location">
    <subcellularLocation>
        <location evidence="1">Cytoplasm</location>
    </subcellularLocation>
</comment>
<comment type="miscellaneous">
    <text evidence="1">Reaction proceeds by a ping-pong mechanism involving intermediate methylation of a conserved cysteine residue.</text>
</comment>
<comment type="similarity">
    <text evidence="1">Belongs to the radical SAM superfamily. RlmN family.</text>
</comment>
<protein>
    <recommendedName>
        <fullName evidence="1">Dual-specificity RNA methyltransferase RlmN</fullName>
        <ecNumber evidence="1">2.1.1.192</ecNumber>
    </recommendedName>
    <alternativeName>
        <fullName evidence="1">23S rRNA (adenine(2503)-C(2))-methyltransferase</fullName>
    </alternativeName>
    <alternativeName>
        <fullName evidence="1">23S rRNA m2A2503 methyltransferase</fullName>
    </alternativeName>
    <alternativeName>
        <fullName evidence="1">Ribosomal RNA large subunit methyltransferase N</fullName>
    </alternativeName>
    <alternativeName>
        <fullName evidence="1">tRNA (adenine(37)-C(2))-methyltransferase</fullName>
    </alternativeName>
    <alternativeName>
        <fullName evidence="1">tRNA m2A37 methyltransferase</fullName>
    </alternativeName>
</protein>
<keyword id="KW-0004">4Fe-4S</keyword>
<keyword id="KW-0963">Cytoplasm</keyword>
<keyword id="KW-1015">Disulfide bond</keyword>
<keyword id="KW-0408">Iron</keyword>
<keyword id="KW-0411">Iron-sulfur</keyword>
<keyword id="KW-0479">Metal-binding</keyword>
<keyword id="KW-0489">Methyltransferase</keyword>
<keyword id="KW-1185">Reference proteome</keyword>
<keyword id="KW-0698">rRNA processing</keyword>
<keyword id="KW-0949">S-adenosyl-L-methionine</keyword>
<keyword id="KW-0808">Transferase</keyword>
<keyword id="KW-0819">tRNA processing</keyword>
<gene>
    <name evidence="1" type="primary">rlmN</name>
    <name type="ordered locus">ECA3223</name>
</gene>
<sequence length="398" mass="44401">MSETIVSEQTVSEFSPASADASQSVKASVGKINLLDLNRQQMRDLFMSMGEKPFRADQVMKWMYHYCCDDFNQMTDINKVFRTKLQEIAEIRAPEVVDEQRSSDGTIKWAILVGGQRVETVYIPEEERATLCVSSQVGCALECKFCSTAQQGFNRNLRVSEIIGQVWRAAKIIGAFKVTGQRPITNVVMMGMGEPLLNLTNVVPAMEIMLDDFGFGLSKRRVTLSTSGVVPALDKLGDMIDVALAISLHAPTDDIRNEIMPINKKYNIEMFLSAVRRYLEKSNANQGRVTVEYVMLDHINDGTEHAHQLAECLKDTPCKINLIPWNPFPGAPYGRSSNSRVDRFSKVLMEYGFTTIVRKTRGDDIDAACGQLAGEVVDRTKRTLKKKMAGEPIAVKAV</sequence>
<proteinExistence type="inferred from homology"/>
<feature type="chain" id="PRO_0000350162" description="Dual-specificity RNA methyltransferase RlmN">
    <location>
        <begin position="1"/>
        <end position="398"/>
    </location>
</feature>
<feature type="domain" description="Radical SAM core" evidence="2">
    <location>
        <begin position="125"/>
        <end position="364"/>
    </location>
</feature>
<feature type="active site" description="Proton acceptor" evidence="1">
    <location>
        <position position="119"/>
    </location>
</feature>
<feature type="active site" description="S-methylcysteine intermediate" evidence="1">
    <location>
        <position position="369"/>
    </location>
</feature>
<feature type="binding site" evidence="1">
    <location>
        <position position="139"/>
    </location>
    <ligand>
        <name>[4Fe-4S] cluster</name>
        <dbReference type="ChEBI" id="CHEBI:49883"/>
        <note>4Fe-4S-S-AdoMet</note>
    </ligand>
</feature>
<feature type="binding site" evidence="1">
    <location>
        <position position="143"/>
    </location>
    <ligand>
        <name>[4Fe-4S] cluster</name>
        <dbReference type="ChEBI" id="CHEBI:49883"/>
        <note>4Fe-4S-S-AdoMet</note>
    </ligand>
</feature>
<feature type="binding site" evidence="1">
    <location>
        <position position="146"/>
    </location>
    <ligand>
        <name>[4Fe-4S] cluster</name>
        <dbReference type="ChEBI" id="CHEBI:49883"/>
        <note>4Fe-4S-S-AdoMet</note>
    </ligand>
</feature>
<feature type="binding site" evidence="1">
    <location>
        <begin position="193"/>
        <end position="194"/>
    </location>
    <ligand>
        <name>S-adenosyl-L-methionine</name>
        <dbReference type="ChEBI" id="CHEBI:59789"/>
    </ligand>
</feature>
<feature type="binding site" evidence="1">
    <location>
        <position position="225"/>
    </location>
    <ligand>
        <name>S-adenosyl-L-methionine</name>
        <dbReference type="ChEBI" id="CHEBI:59789"/>
    </ligand>
</feature>
<feature type="binding site" evidence="1">
    <location>
        <begin position="247"/>
        <end position="249"/>
    </location>
    <ligand>
        <name>S-adenosyl-L-methionine</name>
        <dbReference type="ChEBI" id="CHEBI:59789"/>
    </ligand>
</feature>
<feature type="binding site" evidence="1">
    <location>
        <position position="326"/>
    </location>
    <ligand>
        <name>S-adenosyl-L-methionine</name>
        <dbReference type="ChEBI" id="CHEBI:59789"/>
    </ligand>
</feature>
<feature type="disulfide bond" description="(transient)" evidence="1">
    <location>
        <begin position="132"/>
        <end position="369"/>
    </location>
</feature>
<dbReference type="EC" id="2.1.1.192" evidence="1"/>
<dbReference type="EMBL" id="BX950851">
    <property type="protein sequence ID" value="CAG76121.1"/>
    <property type="molecule type" value="Genomic_DNA"/>
</dbReference>
<dbReference type="SMR" id="Q6D273"/>
<dbReference type="STRING" id="218491.ECA3223"/>
<dbReference type="KEGG" id="eca:ECA3223"/>
<dbReference type="eggNOG" id="COG0820">
    <property type="taxonomic scope" value="Bacteria"/>
</dbReference>
<dbReference type="HOGENOM" id="CLU_029101_0_0_6"/>
<dbReference type="Proteomes" id="UP000007966">
    <property type="component" value="Chromosome"/>
</dbReference>
<dbReference type="GO" id="GO:0005737">
    <property type="term" value="C:cytoplasm"/>
    <property type="evidence" value="ECO:0007669"/>
    <property type="project" value="UniProtKB-SubCell"/>
</dbReference>
<dbReference type="GO" id="GO:0051539">
    <property type="term" value="F:4 iron, 4 sulfur cluster binding"/>
    <property type="evidence" value="ECO:0007669"/>
    <property type="project" value="UniProtKB-UniRule"/>
</dbReference>
<dbReference type="GO" id="GO:0046872">
    <property type="term" value="F:metal ion binding"/>
    <property type="evidence" value="ECO:0007669"/>
    <property type="project" value="UniProtKB-KW"/>
</dbReference>
<dbReference type="GO" id="GO:0070040">
    <property type="term" value="F:rRNA (adenine(2503)-C2-)-methyltransferase activity"/>
    <property type="evidence" value="ECO:0007669"/>
    <property type="project" value="UniProtKB-UniRule"/>
</dbReference>
<dbReference type="GO" id="GO:0019843">
    <property type="term" value="F:rRNA binding"/>
    <property type="evidence" value="ECO:0007669"/>
    <property type="project" value="UniProtKB-UniRule"/>
</dbReference>
<dbReference type="GO" id="GO:0002935">
    <property type="term" value="F:tRNA (adenine(37)-C2)-methyltransferase activity"/>
    <property type="evidence" value="ECO:0007669"/>
    <property type="project" value="UniProtKB-UniRule"/>
</dbReference>
<dbReference type="GO" id="GO:0000049">
    <property type="term" value="F:tRNA binding"/>
    <property type="evidence" value="ECO:0007669"/>
    <property type="project" value="UniProtKB-UniRule"/>
</dbReference>
<dbReference type="GO" id="GO:0070475">
    <property type="term" value="P:rRNA base methylation"/>
    <property type="evidence" value="ECO:0007669"/>
    <property type="project" value="UniProtKB-UniRule"/>
</dbReference>
<dbReference type="GO" id="GO:0030488">
    <property type="term" value="P:tRNA methylation"/>
    <property type="evidence" value="ECO:0007669"/>
    <property type="project" value="UniProtKB-UniRule"/>
</dbReference>
<dbReference type="CDD" id="cd01335">
    <property type="entry name" value="Radical_SAM"/>
    <property type="match status" value="1"/>
</dbReference>
<dbReference type="FunFam" id="1.10.150.530:FF:000001">
    <property type="entry name" value="Dual-specificity RNA methyltransferase RlmN"/>
    <property type="match status" value="1"/>
</dbReference>
<dbReference type="FunFam" id="3.20.20.70:FF:000008">
    <property type="entry name" value="Dual-specificity RNA methyltransferase RlmN"/>
    <property type="match status" value="1"/>
</dbReference>
<dbReference type="Gene3D" id="1.10.150.530">
    <property type="match status" value="1"/>
</dbReference>
<dbReference type="Gene3D" id="3.20.20.70">
    <property type="entry name" value="Aldolase class I"/>
    <property type="match status" value="1"/>
</dbReference>
<dbReference type="HAMAP" id="MF_01849">
    <property type="entry name" value="RNA_methyltr_RlmN"/>
    <property type="match status" value="1"/>
</dbReference>
<dbReference type="InterPro" id="IPR013785">
    <property type="entry name" value="Aldolase_TIM"/>
</dbReference>
<dbReference type="InterPro" id="IPR040072">
    <property type="entry name" value="Methyltransferase_A"/>
</dbReference>
<dbReference type="InterPro" id="IPR048641">
    <property type="entry name" value="RlmN_N"/>
</dbReference>
<dbReference type="InterPro" id="IPR027492">
    <property type="entry name" value="RNA_MTrfase_RlmN"/>
</dbReference>
<dbReference type="InterPro" id="IPR004383">
    <property type="entry name" value="rRNA_lsu_MTrfase_RlmN/Cfr"/>
</dbReference>
<dbReference type="InterPro" id="IPR007197">
    <property type="entry name" value="rSAM"/>
</dbReference>
<dbReference type="NCBIfam" id="NF008396">
    <property type="entry name" value="PRK11194.1"/>
    <property type="match status" value="1"/>
</dbReference>
<dbReference type="NCBIfam" id="TIGR00048">
    <property type="entry name" value="rRNA_mod_RlmN"/>
    <property type="match status" value="1"/>
</dbReference>
<dbReference type="PANTHER" id="PTHR30544">
    <property type="entry name" value="23S RRNA METHYLTRANSFERASE"/>
    <property type="match status" value="1"/>
</dbReference>
<dbReference type="PANTHER" id="PTHR30544:SF5">
    <property type="entry name" value="RADICAL SAM CORE DOMAIN-CONTAINING PROTEIN"/>
    <property type="match status" value="1"/>
</dbReference>
<dbReference type="Pfam" id="PF04055">
    <property type="entry name" value="Radical_SAM"/>
    <property type="match status" value="1"/>
</dbReference>
<dbReference type="Pfam" id="PF21016">
    <property type="entry name" value="RlmN_N"/>
    <property type="match status" value="1"/>
</dbReference>
<dbReference type="PIRSF" id="PIRSF006004">
    <property type="entry name" value="CHP00048"/>
    <property type="match status" value="1"/>
</dbReference>
<dbReference type="SFLD" id="SFLDF00275">
    <property type="entry name" value="adenosine_C2_methyltransferase"/>
    <property type="match status" value="1"/>
</dbReference>
<dbReference type="SFLD" id="SFLDS00029">
    <property type="entry name" value="Radical_SAM"/>
    <property type="match status" value="1"/>
</dbReference>
<dbReference type="SUPFAM" id="SSF102114">
    <property type="entry name" value="Radical SAM enzymes"/>
    <property type="match status" value="1"/>
</dbReference>
<dbReference type="PROSITE" id="PS51918">
    <property type="entry name" value="RADICAL_SAM"/>
    <property type="match status" value="1"/>
</dbReference>
<name>RLMN_PECAS</name>
<accession>Q6D273</accession>
<reference key="1">
    <citation type="journal article" date="2004" name="Proc. Natl. Acad. Sci. U.S.A.">
        <title>Genome sequence of the enterobacterial phytopathogen Erwinia carotovora subsp. atroseptica and characterization of virulence factors.</title>
        <authorList>
            <person name="Bell K.S."/>
            <person name="Sebaihia M."/>
            <person name="Pritchard L."/>
            <person name="Holden M.T.G."/>
            <person name="Hyman L.J."/>
            <person name="Holeva M.C."/>
            <person name="Thomson N.R."/>
            <person name="Bentley S.D."/>
            <person name="Churcher L.J.C."/>
            <person name="Mungall K."/>
            <person name="Atkin R."/>
            <person name="Bason N."/>
            <person name="Brooks K."/>
            <person name="Chillingworth T."/>
            <person name="Clark K."/>
            <person name="Doggett J."/>
            <person name="Fraser A."/>
            <person name="Hance Z."/>
            <person name="Hauser H."/>
            <person name="Jagels K."/>
            <person name="Moule S."/>
            <person name="Norbertczak H."/>
            <person name="Ormond D."/>
            <person name="Price C."/>
            <person name="Quail M.A."/>
            <person name="Sanders M."/>
            <person name="Walker D."/>
            <person name="Whitehead S."/>
            <person name="Salmond G.P.C."/>
            <person name="Birch P.R.J."/>
            <person name="Parkhill J."/>
            <person name="Toth I.K."/>
        </authorList>
    </citation>
    <scope>NUCLEOTIDE SEQUENCE [LARGE SCALE GENOMIC DNA]</scope>
    <source>
        <strain>SCRI 1043 / ATCC BAA-672</strain>
    </source>
</reference>